<gene>
    <name evidence="1" type="primary">rpoA2</name>
    <name type="ordered locus">FTW_0446</name>
</gene>
<dbReference type="EC" id="2.7.7.6" evidence="1"/>
<dbReference type="EMBL" id="CP000608">
    <property type="protein sequence ID" value="ABO46368.1"/>
    <property type="molecule type" value="Genomic_DNA"/>
</dbReference>
<dbReference type="RefSeq" id="WP_003025265.1">
    <property type="nucleotide sequence ID" value="NC_009257.1"/>
</dbReference>
<dbReference type="SMR" id="A4IWR6"/>
<dbReference type="KEGG" id="ftw:FTW_0446"/>
<dbReference type="HOGENOM" id="CLU_053084_0_0_6"/>
<dbReference type="GO" id="GO:0005737">
    <property type="term" value="C:cytoplasm"/>
    <property type="evidence" value="ECO:0007669"/>
    <property type="project" value="UniProtKB-ARBA"/>
</dbReference>
<dbReference type="GO" id="GO:0000428">
    <property type="term" value="C:DNA-directed RNA polymerase complex"/>
    <property type="evidence" value="ECO:0007669"/>
    <property type="project" value="UniProtKB-KW"/>
</dbReference>
<dbReference type="GO" id="GO:0003677">
    <property type="term" value="F:DNA binding"/>
    <property type="evidence" value="ECO:0007669"/>
    <property type="project" value="UniProtKB-UniRule"/>
</dbReference>
<dbReference type="GO" id="GO:0003899">
    <property type="term" value="F:DNA-directed RNA polymerase activity"/>
    <property type="evidence" value="ECO:0007669"/>
    <property type="project" value="UniProtKB-UniRule"/>
</dbReference>
<dbReference type="GO" id="GO:0046983">
    <property type="term" value="F:protein dimerization activity"/>
    <property type="evidence" value="ECO:0007669"/>
    <property type="project" value="InterPro"/>
</dbReference>
<dbReference type="GO" id="GO:0006351">
    <property type="term" value="P:DNA-templated transcription"/>
    <property type="evidence" value="ECO:0007669"/>
    <property type="project" value="UniProtKB-UniRule"/>
</dbReference>
<dbReference type="FunFam" id="1.10.150.20:FF:000001">
    <property type="entry name" value="DNA-directed RNA polymerase subunit alpha"/>
    <property type="match status" value="1"/>
</dbReference>
<dbReference type="Gene3D" id="1.10.150.20">
    <property type="entry name" value="5' to 3' exonuclease, C-terminal subdomain"/>
    <property type="match status" value="1"/>
</dbReference>
<dbReference type="Gene3D" id="2.170.120.12">
    <property type="entry name" value="DNA-directed RNA polymerase, insert domain"/>
    <property type="match status" value="1"/>
</dbReference>
<dbReference type="Gene3D" id="3.30.1360.10">
    <property type="entry name" value="RNA polymerase, RBP11-like subunit"/>
    <property type="match status" value="1"/>
</dbReference>
<dbReference type="HAMAP" id="MF_00059">
    <property type="entry name" value="RNApol_bact_RpoA"/>
    <property type="match status" value="1"/>
</dbReference>
<dbReference type="InterPro" id="IPR011262">
    <property type="entry name" value="DNA-dir_RNA_pol_insert"/>
</dbReference>
<dbReference type="InterPro" id="IPR011263">
    <property type="entry name" value="DNA-dir_RNA_pol_RpoA/D/Rpb3"/>
</dbReference>
<dbReference type="InterPro" id="IPR011773">
    <property type="entry name" value="DNA-dir_RpoA"/>
</dbReference>
<dbReference type="InterPro" id="IPR036603">
    <property type="entry name" value="RBP11-like"/>
</dbReference>
<dbReference type="InterPro" id="IPR011260">
    <property type="entry name" value="RNAP_asu_C"/>
</dbReference>
<dbReference type="InterPro" id="IPR036643">
    <property type="entry name" value="RNApol_insert_sf"/>
</dbReference>
<dbReference type="NCBIfam" id="NF003513">
    <property type="entry name" value="PRK05182.1-2"/>
    <property type="match status" value="1"/>
</dbReference>
<dbReference type="NCBIfam" id="TIGR02027">
    <property type="entry name" value="rpoA"/>
    <property type="match status" value="1"/>
</dbReference>
<dbReference type="Pfam" id="PF01000">
    <property type="entry name" value="RNA_pol_A_bac"/>
    <property type="match status" value="1"/>
</dbReference>
<dbReference type="Pfam" id="PF03118">
    <property type="entry name" value="RNA_pol_A_CTD"/>
    <property type="match status" value="1"/>
</dbReference>
<dbReference type="Pfam" id="PF01193">
    <property type="entry name" value="RNA_pol_L"/>
    <property type="match status" value="1"/>
</dbReference>
<dbReference type="SMART" id="SM00662">
    <property type="entry name" value="RPOLD"/>
    <property type="match status" value="1"/>
</dbReference>
<dbReference type="SUPFAM" id="SSF47789">
    <property type="entry name" value="C-terminal domain of RNA polymerase alpha subunit"/>
    <property type="match status" value="1"/>
</dbReference>
<dbReference type="SUPFAM" id="SSF56553">
    <property type="entry name" value="Insert subdomain of RNA polymerase alpha subunit"/>
    <property type="match status" value="1"/>
</dbReference>
<dbReference type="SUPFAM" id="SSF55257">
    <property type="entry name" value="RBP11-like subunits of RNA polymerase"/>
    <property type="match status" value="1"/>
</dbReference>
<name>RPOA2_FRATW</name>
<keyword id="KW-0240">DNA-directed RNA polymerase</keyword>
<keyword id="KW-0548">Nucleotidyltransferase</keyword>
<keyword id="KW-0804">Transcription</keyword>
<keyword id="KW-0808">Transferase</keyword>
<protein>
    <recommendedName>
        <fullName evidence="1">DNA-directed RNA polymerase subunit alpha 2</fullName>
        <shortName evidence="1">RNAP subunit alpha 2</shortName>
        <ecNumber evidence="1">2.7.7.6</ecNumber>
    </recommendedName>
    <alternativeName>
        <fullName evidence="1">RNA polymerase subunit alpha 2</fullName>
    </alternativeName>
    <alternativeName>
        <fullName evidence="1">Transcriptase subunit alpha 2</fullName>
    </alternativeName>
</protein>
<reference key="1">
    <citation type="journal article" date="2007" name="PLoS ONE">
        <title>Complete genomic characterization of a pathogenic A.II strain of Francisella tularensis subspecies tularensis.</title>
        <authorList>
            <person name="Beckstrom-Sternberg S.M."/>
            <person name="Auerbach R.K."/>
            <person name="Godbole S."/>
            <person name="Pearson J.V."/>
            <person name="Beckstrom-Sternberg J.S."/>
            <person name="Deng Z."/>
            <person name="Munk C."/>
            <person name="Kubota K."/>
            <person name="Zhou Y."/>
            <person name="Bruce D."/>
            <person name="Noronha J."/>
            <person name="Scheuermann R.H."/>
            <person name="Wang A."/>
            <person name="Wei X."/>
            <person name="Wang J."/>
            <person name="Hao J."/>
            <person name="Wagner D.M."/>
            <person name="Brettin T.S."/>
            <person name="Brown N."/>
            <person name="Gilna P."/>
            <person name="Keim P.S."/>
        </authorList>
    </citation>
    <scope>NUCLEOTIDE SEQUENCE [LARGE SCALE GENOMIC DNA]</scope>
    <source>
        <strain>WY96-3418</strain>
    </source>
</reference>
<organism>
    <name type="scientific">Francisella tularensis subsp. tularensis (strain WY96-3418)</name>
    <dbReference type="NCBI Taxonomy" id="418136"/>
    <lineage>
        <taxon>Bacteria</taxon>
        <taxon>Pseudomonadati</taxon>
        <taxon>Pseudomonadota</taxon>
        <taxon>Gammaproteobacteria</taxon>
        <taxon>Thiotrichales</taxon>
        <taxon>Francisellaceae</taxon>
        <taxon>Francisella</taxon>
    </lineage>
</organism>
<feature type="chain" id="PRO_0000296813" description="DNA-directed RNA polymerase subunit alpha 2">
    <location>
        <begin position="1"/>
        <end position="318"/>
    </location>
</feature>
<feature type="region of interest" description="Alpha N-terminal domain (alpha-NTD)" evidence="1">
    <location>
        <begin position="1"/>
        <end position="227"/>
    </location>
</feature>
<feature type="region of interest" description="Alpha C-terminal domain (alpha-CTD)" evidence="1">
    <location>
        <begin position="242"/>
        <end position="318"/>
    </location>
</feature>
<sequence length="318" mass="35127">MALENLLHPTNIKIDEYAKNATKFSFEALERGVGYTLGFALKQTMLYSIAGACVTSIKINDGKVTSLEDVIPCDETVADIILNVKSLPVTLAEGVETGTITFELSGSEEEIFSEEAKLSEGLAITEEVFICSYNGGKKLKIEAKVEKGVGFRPAQDNFKDGEFLLDATFSPVVFCDFEIKDARVGRRTDLDKLELNIKTNGNVNCEEALRLAATKIQNQLRNIVDIEEINKGIFVEDPTKDINPILLKHVEELNLTARSSNCLKAVNIRLIGELVQKTENELLKAPNFGKKSLTEIKDKLSELGLSLGTLIENWPQDL</sequence>
<evidence type="ECO:0000255" key="1">
    <source>
        <dbReference type="HAMAP-Rule" id="MF_00059"/>
    </source>
</evidence>
<comment type="function">
    <text evidence="1">DNA-dependent RNA polymerase catalyzes the transcription of DNA into RNA using the four ribonucleoside triphosphates as substrates.</text>
</comment>
<comment type="catalytic activity">
    <reaction evidence="1">
        <text>RNA(n) + a ribonucleoside 5'-triphosphate = RNA(n+1) + diphosphate</text>
        <dbReference type="Rhea" id="RHEA:21248"/>
        <dbReference type="Rhea" id="RHEA-COMP:14527"/>
        <dbReference type="Rhea" id="RHEA-COMP:17342"/>
        <dbReference type="ChEBI" id="CHEBI:33019"/>
        <dbReference type="ChEBI" id="CHEBI:61557"/>
        <dbReference type="ChEBI" id="CHEBI:140395"/>
        <dbReference type="EC" id="2.7.7.6"/>
    </reaction>
</comment>
<comment type="subunit">
    <text evidence="1">Homodimer. The RNAP catalytic core consists of 2 alpha, 1 beta, 1 beta' and 1 omega subunit. When a sigma factor is associated with the core the holoenzyme is formed, which can initiate transcription.</text>
</comment>
<comment type="domain">
    <text evidence="1">The N-terminal domain is essential for RNAP assembly and basal transcription, whereas the C-terminal domain is involved in interaction with transcriptional regulators and with upstream promoter elements.</text>
</comment>
<comment type="similarity">
    <text evidence="1">Belongs to the RNA polymerase alpha chain family.</text>
</comment>
<accession>A4IWR6</accession>
<proteinExistence type="inferred from homology"/>